<accession>Q68G31</accession>
<accession>Q8R423</accession>
<sequence length="288" mass="31687">MKLPIFIADAFTVTAFHGNPAAVCLLESILQEDAHQQIAREMNLSETAFIRKLQPTDSFSQSSCFGLRWFTPVSEVPLCGHATMASAAVLFHKIKNVNSTLTFVTLSGELKARRAEDGIVLDFPLYPTFPQDFHEVKDLIKAAIGDTTVQDIQYSPDTRKLLVRLSDSYDRSFLESLKVNTEPLPGIEKTGKVKGLILTVKGESGGQTTPYDFYSRYFAPWVGVPEDPVTGSAHTVLSSYWSQQLGKKEMRAFQCSCRGGELDISLRPDGRVDMKGGAAVVLEGMLTA</sequence>
<keyword id="KW-0413">Isomerase</keyword>
<keyword id="KW-1185">Reference proteome</keyword>
<comment type="subunit">
    <text evidence="1">Interacts with UNRIP/MAWD.</text>
</comment>
<comment type="similarity">
    <text evidence="2">Belongs to the PhzF family.</text>
</comment>
<name>PBLD_RAT</name>
<feature type="chain" id="PRO_0000245584" description="Phenazine biosynthesis-like domain-containing protein">
    <location>
        <begin position="1"/>
        <end position="288"/>
    </location>
</feature>
<feature type="active site" evidence="1">
    <location>
        <position position="46"/>
    </location>
</feature>
<feature type="sequence conflict" description="In Ref. 1; AAL92521." evidence="2" ref="1">
    <original>H</original>
    <variation>R</variation>
    <location>
        <position position="17"/>
    </location>
</feature>
<feature type="sequence conflict" description="In Ref. 1; AAL92521." evidence="2" ref="1">
    <original>T</original>
    <variation>R</variation>
    <location>
        <position position="83"/>
    </location>
</feature>
<feature type="sequence conflict" description="In Ref. 1; AAL92521." evidence="2" ref="1">
    <original>W</original>
    <variation>R</variation>
    <location>
        <position position="221"/>
    </location>
</feature>
<feature type="sequence conflict" description="In Ref. 1; AAL92521." evidence="2" ref="1">
    <original>L</original>
    <variation>V</variation>
    <location>
        <position position="245"/>
    </location>
</feature>
<organism>
    <name type="scientific">Rattus norvegicus</name>
    <name type="common">Rat</name>
    <dbReference type="NCBI Taxonomy" id="10116"/>
    <lineage>
        <taxon>Eukaryota</taxon>
        <taxon>Metazoa</taxon>
        <taxon>Chordata</taxon>
        <taxon>Craniata</taxon>
        <taxon>Vertebrata</taxon>
        <taxon>Euteleostomi</taxon>
        <taxon>Mammalia</taxon>
        <taxon>Eutheria</taxon>
        <taxon>Euarchontoglires</taxon>
        <taxon>Glires</taxon>
        <taxon>Rodentia</taxon>
        <taxon>Myomorpha</taxon>
        <taxon>Muroidea</taxon>
        <taxon>Muridae</taxon>
        <taxon>Murinae</taxon>
        <taxon>Rattus</taxon>
    </lineage>
</organism>
<protein>
    <recommendedName>
        <fullName>Phenazine biosynthesis-like domain-containing protein</fullName>
        <ecNumber>5.1.-.-</ecNumber>
    </recommendedName>
</protein>
<evidence type="ECO:0000250" key="1"/>
<evidence type="ECO:0000305" key="2"/>
<reference key="1">
    <citation type="submission" date="2002-03" db="EMBL/GenBank/DDBJ databases">
        <authorList>
            <person name="Pawlak A."/>
            <person name="Guellaen G."/>
        </authorList>
    </citation>
    <scope>NUCLEOTIDE SEQUENCE [MRNA]</scope>
</reference>
<reference key="2">
    <citation type="journal article" date="2004" name="Genome Res.">
        <title>The status, quality, and expansion of the NIH full-length cDNA project: the Mammalian Gene Collection (MGC).</title>
        <authorList>
            <consortium name="The MGC Project Team"/>
        </authorList>
    </citation>
    <scope>NUCLEOTIDE SEQUENCE [LARGE SCALE MRNA]</scope>
    <source>
        <tissue>Kidney</tissue>
    </source>
</reference>
<dbReference type="EC" id="5.1.-.-"/>
<dbReference type="EMBL" id="AY083160">
    <property type="protein sequence ID" value="AAL92521.1"/>
    <property type="molecule type" value="mRNA"/>
</dbReference>
<dbReference type="EMBL" id="BC078735">
    <property type="protein sequence ID" value="AAH78735.1"/>
    <property type="molecule type" value="mRNA"/>
</dbReference>
<dbReference type="RefSeq" id="NP_612539.2">
    <property type="nucleotide sequence ID" value="NM_138530.2"/>
</dbReference>
<dbReference type="RefSeq" id="XP_006256434.1">
    <property type="nucleotide sequence ID" value="XM_006256372.3"/>
</dbReference>
<dbReference type="RefSeq" id="XP_017457025.1">
    <property type="nucleotide sequence ID" value="XM_017601536.1"/>
</dbReference>
<dbReference type="SMR" id="Q68G31"/>
<dbReference type="FunCoup" id="Q68G31">
    <property type="interactions" value="119"/>
</dbReference>
<dbReference type="STRING" id="10116.ENSRNOP00000000434"/>
<dbReference type="iPTMnet" id="Q68G31"/>
<dbReference type="PhosphoSitePlus" id="Q68G31"/>
<dbReference type="PaxDb" id="10116-ENSRNOP00000000434"/>
<dbReference type="Ensembl" id="ENSRNOT00000000434.7">
    <property type="protein sequence ID" value="ENSRNOP00000000434.4"/>
    <property type="gene ID" value="ENSRNOG00000000386.7"/>
</dbReference>
<dbReference type="GeneID" id="171564"/>
<dbReference type="KEGG" id="rno:171564"/>
<dbReference type="UCSC" id="RGD:621263">
    <property type="organism name" value="rat"/>
</dbReference>
<dbReference type="AGR" id="RGD:621263"/>
<dbReference type="CTD" id="68371"/>
<dbReference type="RGD" id="621263">
    <property type="gene designation" value="Pbld"/>
</dbReference>
<dbReference type="eggNOG" id="KOG3033">
    <property type="taxonomic scope" value="Eukaryota"/>
</dbReference>
<dbReference type="GeneTree" id="ENSGT00390000017595"/>
<dbReference type="HOGENOM" id="CLU_048756_2_0_1"/>
<dbReference type="InParanoid" id="Q68G31"/>
<dbReference type="OMA" id="DWALRWF"/>
<dbReference type="OrthoDB" id="15467at9989"/>
<dbReference type="PhylomeDB" id="Q68G31"/>
<dbReference type="TreeFam" id="TF314596"/>
<dbReference type="PRO" id="PR:Q68G31"/>
<dbReference type="Proteomes" id="UP000002494">
    <property type="component" value="Chromosome 20"/>
</dbReference>
<dbReference type="Bgee" id="ENSRNOG00000000386">
    <property type="expression patterns" value="Expressed in adult mammalian kidney and 18 other cell types or tissues"/>
</dbReference>
<dbReference type="GO" id="GO:0005737">
    <property type="term" value="C:cytoplasm"/>
    <property type="evidence" value="ECO:0000266"/>
    <property type="project" value="RGD"/>
</dbReference>
<dbReference type="GO" id="GO:0042802">
    <property type="term" value="F:identical protein binding"/>
    <property type="evidence" value="ECO:0000266"/>
    <property type="project" value="RGD"/>
</dbReference>
<dbReference type="GO" id="GO:0016853">
    <property type="term" value="F:isomerase activity"/>
    <property type="evidence" value="ECO:0000318"/>
    <property type="project" value="GO_Central"/>
</dbReference>
<dbReference type="GO" id="GO:0009058">
    <property type="term" value="P:biosynthetic process"/>
    <property type="evidence" value="ECO:0007669"/>
    <property type="project" value="InterPro"/>
</dbReference>
<dbReference type="GO" id="GO:0030277">
    <property type="term" value="P:maintenance of gastrointestinal epithelium"/>
    <property type="evidence" value="ECO:0000266"/>
    <property type="project" value="RGD"/>
</dbReference>
<dbReference type="GO" id="GO:0030512">
    <property type="term" value="P:negative regulation of transforming growth factor beta receptor signaling pathway"/>
    <property type="evidence" value="ECO:0000266"/>
    <property type="project" value="RGD"/>
</dbReference>
<dbReference type="FunFam" id="3.10.310.10:FF:000013">
    <property type="entry name" value="Phenazine biosynthesis-like domain-containing protein 1"/>
    <property type="match status" value="1"/>
</dbReference>
<dbReference type="FunFam" id="3.10.310.10:FF:000020">
    <property type="entry name" value="Phenazine biosynthesis-like domain-containing protein 1"/>
    <property type="match status" value="1"/>
</dbReference>
<dbReference type="Gene3D" id="3.10.310.10">
    <property type="entry name" value="Diaminopimelate Epimerase, Chain A, domain 1"/>
    <property type="match status" value="2"/>
</dbReference>
<dbReference type="InterPro" id="IPR003719">
    <property type="entry name" value="Phenazine_PhzF-like"/>
</dbReference>
<dbReference type="NCBIfam" id="TIGR00654">
    <property type="entry name" value="PhzF_family"/>
    <property type="match status" value="1"/>
</dbReference>
<dbReference type="PANTHER" id="PTHR13774">
    <property type="entry name" value="PHENAZINE BIOSYNTHESIS PROTEIN"/>
    <property type="match status" value="1"/>
</dbReference>
<dbReference type="PANTHER" id="PTHR13774:SF17">
    <property type="entry name" value="PHENAZINE BIOSYNTHESIS-LIKE DOMAIN-CONTAINING PROTEIN"/>
    <property type="match status" value="1"/>
</dbReference>
<dbReference type="Pfam" id="PF02567">
    <property type="entry name" value="PhzC-PhzF"/>
    <property type="match status" value="1"/>
</dbReference>
<dbReference type="PIRSF" id="PIRSF016184">
    <property type="entry name" value="PhzC_PhzF"/>
    <property type="match status" value="1"/>
</dbReference>
<dbReference type="SUPFAM" id="SSF54506">
    <property type="entry name" value="Diaminopimelate epimerase-like"/>
    <property type="match status" value="1"/>
</dbReference>
<proteinExistence type="evidence at transcript level"/>
<gene>
    <name type="primary">Pbld</name>
    <name type="synonym">Mawbp</name>
</gene>